<protein>
    <recommendedName>
        <fullName evidence="1">ATP synthase epsilon chain</fullName>
    </recommendedName>
    <alternativeName>
        <fullName evidence="1">ATP synthase F1 sector epsilon subunit</fullName>
    </alternativeName>
    <alternativeName>
        <fullName evidence="1">F-ATPase epsilon subunit</fullName>
    </alternativeName>
</protein>
<name>ATPE_NEIMB</name>
<dbReference type="EMBL" id="AE002098">
    <property type="protein sequence ID" value="AAF42262.1"/>
    <property type="molecule type" value="Genomic_DNA"/>
</dbReference>
<dbReference type="PIR" id="F81024">
    <property type="entry name" value="F81024"/>
</dbReference>
<dbReference type="RefSeq" id="NP_274927.1">
    <property type="nucleotide sequence ID" value="NC_003112.2"/>
</dbReference>
<dbReference type="RefSeq" id="WP_002225828.1">
    <property type="nucleotide sequence ID" value="NC_003112.2"/>
</dbReference>
<dbReference type="SMR" id="Q9JXQ3"/>
<dbReference type="FunCoup" id="Q9JXQ3">
    <property type="interactions" value="341"/>
</dbReference>
<dbReference type="STRING" id="122586.NMB1933"/>
<dbReference type="PaxDb" id="122586-NMB1933"/>
<dbReference type="KEGG" id="nme:NMB1933"/>
<dbReference type="PATRIC" id="fig|122586.8.peg.2461"/>
<dbReference type="HOGENOM" id="CLU_084338_2_0_4"/>
<dbReference type="InParanoid" id="Q9JXQ3"/>
<dbReference type="OrthoDB" id="9791445at2"/>
<dbReference type="Proteomes" id="UP000000425">
    <property type="component" value="Chromosome"/>
</dbReference>
<dbReference type="GO" id="GO:0005886">
    <property type="term" value="C:plasma membrane"/>
    <property type="evidence" value="ECO:0007669"/>
    <property type="project" value="UniProtKB-SubCell"/>
</dbReference>
<dbReference type="GO" id="GO:0045259">
    <property type="term" value="C:proton-transporting ATP synthase complex"/>
    <property type="evidence" value="ECO:0007669"/>
    <property type="project" value="UniProtKB-KW"/>
</dbReference>
<dbReference type="GO" id="GO:0005524">
    <property type="term" value="F:ATP binding"/>
    <property type="evidence" value="ECO:0007669"/>
    <property type="project" value="UniProtKB-UniRule"/>
</dbReference>
<dbReference type="GO" id="GO:0046933">
    <property type="term" value="F:proton-transporting ATP synthase activity, rotational mechanism"/>
    <property type="evidence" value="ECO:0007669"/>
    <property type="project" value="UniProtKB-UniRule"/>
</dbReference>
<dbReference type="GO" id="GO:0015986">
    <property type="term" value="P:proton motive force-driven ATP synthesis"/>
    <property type="evidence" value="ECO:0000318"/>
    <property type="project" value="GO_Central"/>
</dbReference>
<dbReference type="CDD" id="cd12152">
    <property type="entry name" value="F1-ATPase_delta"/>
    <property type="match status" value="1"/>
</dbReference>
<dbReference type="FunFam" id="2.60.15.10:FF:000012">
    <property type="entry name" value="ATP synthase epsilon chain"/>
    <property type="match status" value="1"/>
</dbReference>
<dbReference type="Gene3D" id="2.60.15.10">
    <property type="entry name" value="F0F1 ATP synthase delta/epsilon subunit, N-terminal"/>
    <property type="match status" value="1"/>
</dbReference>
<dbReference type="HAMAP" id="MF_00530">
    <property type="entry name" value="ATP_synth_epsil_bac"/>
    <property type="match status" value="1"/>
</dbReference>
<dbReference type="InterPro" id="IPR036794">
    <property type="entry name" value="ATP_F1_dsu/esu_C_sf"/>
</dbReference>
<dbReference type="InterPro" id="IPR001469">
    <property type="entry name" value="ATP_synth_F1_dsu/esu"/>
</dbReference>
<dbReference type="InterPro" id="IPR020546">
    <property type="entry name" value="ATP_synth_F1_dsu/esu_N"/>
</dbReference>
<dbReference type="InterPro" id="IPR020547">
    <property type="entry name" value="ATP_synth_F1_esu_C"/>
</dbReference>
<dbReference type="InterPro" id="IPR036771">
    <property type="entry name" value="ATPsynth_dsu/esu_N"/>
</dbReference>
<dbReference type="NCBIfam" id="TIGR01216">
    <property type="entry name" value="ATP_synt_epsi"/>
    <property type="match status" value="1"/>
</dbReference>
<dbReference type="NCBIfam" id="NF001847">
    <property type="entry name" value="PRK00571.1-4"/>
    <property type="match status" value="1"/>
</dbReference>
<dbReference type="NCBIfam" id="NF009977">
    <property type="entry name" value="PRK13442.1"/>
    <property type="match status" value="1"/>
</dbReference>
<dbReference type="PANTHER" id="PTHR13822">
    <property type="entry name" value="ATP SYNTHASE DELTA/EPSILON CHAIN"/>
    <property type="match status" value="1"/>
</dbReference>
<dbReference type="PANTHER" id="PTHR13822:SF10">
    <property type="entry name" value="ATP SYNTHASE EPSILON CHAIN, CHLOROPLASTIC"/>
    <property type="match status" value="1"/>
</dbReference>
<dbReference type="Pfam" id="PF00401">
    <property type="entry name" value="ATP-synt_DE"/>
    <property type="match status" value="1"/>
</dbReference>
<dbReference type="Pfam" id="PF02823">
    <property type="entry name" value="ATP-synt_DE_N"/>
    <property type="match status" value="1"/>
</dbReference>
<dbReference type="SUPFAM" id="SSF46604">
    <property type="entry name" value="Epsilon subunit of F1F0-ATP synthase C-terminal domain"/>
    <property type="match status" value="1"/>
</dbReference>
<dbReference type="SUPFAM" id="SSF51344">
    <property type="entry name" value="Epsilon subunit of F1F0-ATP synthase N-terminal domain"/>
    <property type="match status" value="1"/>
</dbReference>
<sequence>MSIMQVEVVSSEQKIYSGEATFIVVPTVQGELGIYPRHEPIMSLVRPGALRLTVPGEDKEVLVAVSGGVLEVQPDKVTVLADVAVRSAEMDRARAEEAKKAAEAGISQAKDDKALAEAHKVLAAAIAQLKTLDYIRSHKK</sequence>
<gene>
    <name evidence="1" type="primary">atpC</name>
    <name type="ordered locus">NMB1933</name>
</gene>
<evidence type="ECO:0000255" key="1">
    <source>
        <dbReference type="HAMAP-Rule" id="MF_00530"/>
    </source>
</evidence>
<accession>Q9JXQ3</accession>
<keyword id="KW-0066">ATP synthesis</keyword>
<keyword id="KW-0997">Cell inner membrane</keyword>
<keyword id="KW-1003">Cell membrane</keyword>
<keyword id="KW-0139">CF(1)</keyword>
<keyword id="KW-0375">Hydrogen ion transport</keyword>
<keyword id="KW-0406">Ion transport</keyword>
<keyword id="KW-0472">Membrane</keyword>
<keyword id="KW-1185">Reference proteome</keyword>
<keyword id="KW-0813">Transport</keyword>
<proteinExistence type="inferred from homology"/>
<feature type="chain" id="PRO_0000188168" description="ATP synthase epsilon chain">
    <location>
        <begin position="1"/>
        <end position="140"/>
    </location>
</feature>
<reference key="1">
    <citation type="journal article" date="2000" name="Science">
        <title>Complete genome sequence of Neisseria meningitidis serogroup B strain MC58.</title>
        <authorList>
            <person name="Tettelin H."/>
            <person name="Saunders N.J."/>
            <person name="Heidelberg J.F."/>
            <person name="Jeffries A.C."/>
            <person name="Nelson K.E."/>
            <person name="Eisen J.A."/>
            <person name="Ketchum K.A."/>
            <person name="Hood D.W."/>
            <person name="Peden J.F."/>
            <person name="Dodson R.J."/>
            <person name="Nelson W.C."/>
            <person name="Gwinn M.L."/>
            <person name="DeBoy R.T."/>
            <person name="Peterson J.D."/>
            <person name="Hickey E.K."/>
            <person name="Haft D.H."/>
            <person name="Salzberg S.L."/>
            <person name="White O."/>
            <person name="Fleischmann R.D."/>
            <person name="Dougherty B.A."/>
            <person name="Mason T.M."/>
            <person name="Ciecko A."/>
            <person name="Parksey D.S."/>
            <person name="Blair E."/>
            <person name="Cittone H."/>
            <person name="Clark E.B."/>
            <person name="Cotton M.D."/>
            <person name="Utterback T.R."/>
            <person name="Khouri H.M."/>
            <person name="Qin H."/>
            <person name="Vamathevan J.J."/>
            <person name="Gill J."/>
            <person name="Scarlato V."/>
            <person name="Masignani V."/>
            <person name="Pizza M."/>
            <person name="Grandi G."/>
            <person name="Sun L."/>
            <person name="Smith H.O."/>
            <person name="Fraser C.M."/>
            <person name="Moxon E.R."/>
            <person name="Rappuoli R."/>
            <person name="Venter J.C."/>
        </authorList>
    </citation>
    <scope>NUCLEOTIDE SEQUENCE [LARGE SCALE GENOMIC DNA]</scope>
    <source>
        <strain>ATCC BAA-335 / MC58</strain>
    </source>
</reference>
<comment type="function">
    <text evidence="1">Produces ATP from ADP in the presence of a proton gradient across the membrane.</text>
</comment>
<comment type="subunit">
    <text>F-type ATPases have 2 components, CF(1) - the catalytic core - and CF(0) - the membrane proton channel. CF(1) has five subunits: alpha(3), beta(3), gamma(1), delta(1), epsilon(1). CF(0) has three main subunits: a, b and c.</text>
</comment>
<comment type="subcellular location">
    <subcellularLocation>
        <location evidence="1">Cell inner membrane</location>
        <topology evidence="1">Peripheral membrane protein</topology>
    </subcellularLocation>
</comment>
<comment type="similarity">
    <text evidence="1">Belongs to the ATPase epsilon chain family.</text>
</comment>
<organism>
    <name type="scientific">Neisseria meningitidis serogroup B (strain ATCC BAA-335 / MC58)</name>
    <dbReference type="NCBI Taxonomy" id="122586"/>
    <lineage>
        <taxon>Bacteria</taxon>
        <taxon>Pseudomonadati</taxon>
        <taxon>Pseudomonadota</taxon>
        <taxon>Betaproteobacteria</taxon>
        <taxon>Neisseriales</taxon>
        <taxon>Neisseriaceae</taxon>
        <taxon>Neisseria</taxon>
    </lineage>
</organism>